<reference key="1">
    <citation type="submission" date="2008-01" db="EMBL/GenBank/DDBJ databases">
        <title>Complete sequence of Shewanella halifaxensis HAW-EB4.</title>
        <authorList>
            <consortium name="US DOE Joint Genome Institute"/>
            <person name="Copeland A."/>
            <person name="Lucas S."/>
            <person name="Lapidus A."/>
            <person name="Glavina del Rio T."/>
            <person name="Dalin E."/>
            <person name="Tice H."/>
            <person name="Bruce D."/>
            <person name="Goodwin L."/>
            <person name="Pitluck S."/>
            <person name="Sims D."/>
            <person name="Brettin T."/>
            <person name="Detter J.C."/>
            <person name="Han C."/>
            <person name="Kuske C.R."/>
            <person name="Schmutz J."/>
            <person name="Larimer F."/>
            <person name="Land M."/>
            <person name="Hauser L."/>
            <person name="Kyrpides N."/>
            <person name="Kim E."/>
            <person name="Zhao J.-S."/>
            <person name="Richardson P."/>
        </authorList>
    </citation>
    <scope>NUCLEOTIDE SEQUENCE [LARGE SCALE GENOMIC DNA]</scope>
    <source>
        <strain>HAW-EB4</strain>
    </source>
</reference>
<proteinExistence type="inferred from homology"/>
<sequence length="466" mass="52541">MSITSVASVFKGDFAIGSQITVRGWVRSRRDSKAGISFLAVYDGSCFDPIQGVVPNNLENYTNEVLKLTAGCSVVMTGEVVESPGKGQAFEMQVTKLEVVGFVEDPDTYPMAAKRHSIEYLRELAHLRPRTNIIGAVARVRNCLSQAIHRFYNEQGYIWVSTPLITASDTEGAGEMFRVSTLDLENLPRTDKGTVDYSEDFFGKESFLTVSGQLNAETYACALSKVYTFGPTFRAENSNTSRHLAEFWMVEPEVAFANLDDAAKLAEDMLKYCFKAVLEERRDDLEFFAQRVEKTAIERLEAFVSSDFAQIDYTDAIEILKACDKDFEYDVEWGIDLHSEHERYLAEEHFKAPVVVKNYPKDIKAFYMRLNDDGKTVAAMDVLAPGIGEIIGGAQREERLDVLDARLAEMELSQEDYWWYRDLRRYGTVPHAGFGLGFERLVSYVTGVSNIRDVIPFPRSPKSANF</sequence>
<protein>
    <recommendedName>
        <fullName evidence="1">Asparagine--tRNA ligase</fullName>
        <ecNumber evidence="1">6.1.1.22</ecNumber>
    </recommendedName>
    <alternativeName>
        <fullName evidence="1">Asparaginyl-tRNA synthetase</fullName>
        <shortName evidence="1">AsnRS</shortName>
    </alternativeName>
</protein>
<keyword id="KW-0030">Aminoacyl-tRNA synthetase</keyword>
<keyword id="KW-0067">ATP-binding</keyword>
<keyword id="KW-0963">Cytoplasm</keyword>
<keyword id="KW-0436">Ligase</keyword>
<keyword id="KW-0547">Nucleotide-binding</keyword>
<keyword id="KW-0648">Protein biosynthesis</keyword>
<dbReference type="EC" id="6.1.1.22" evidence="1"/>
<dbReference type="EMBL" id="CP000931">
    <property type="protein sequence ID" value="ABZ76819.1"/>
    <property type="molecule type" value="Genomic_DNA"/>
</dbReference>
<dbReference type="RefSeq" id="WP_012277348.1">
    <property type="nucleotide sequence ID" value="NC_010334.1"/>
</dbReference>
<dbReference type="SMR" id="B0TUU1"/>
<dbReference type="STRING" id="458817.Shal_2260"/>
<dbReference type="KEGG" id="shl:Shal_2260"/>
<dbReference type="eggNOG" id="COG0017">
    <property type="taxonomic scope" value="Bacteria"/>
</dbReference>
<dbReference type="HOGENOM" id="CLU_004553_2_0_6"/>
<dbReference type="OrthoDB" id="9762036at2"/>
<dbReference type="Proteomes" id="UP000001317">
    <property type="component" value="Chromosome"/>
</dbReference>
<dbReference type="GO" id="GO:0005737">
    <property type="term" value="C:cytoplasm"/>
    <property type="evidence" value="ECO:0007669"/>
    <property type="project" value="UniProtKB-SubCell"/>
</dbReference>
<dbReference type="GO" id="GO:0004816">
    <property type="term" value="F:asparagine-tRNA ligase activity"/>
    <property type="evidence" value="ECO:0007669"/>
    <property type="project" value="UniProtKB-UniRule"/>
</dbReference>
<dbReference type="GO" id="GO:0005524">
    <property type="term" value="F:ATP binding"/>
    <property type="evidence" value="ECO:0007669"/>
    <property type="project" value="UniProtKB-UniRule"/>
</dbReference>
<dbReference type="GO" id="GO:0003676">
    <property type="term" value="F:nucleic acid binding"/>
    <property type="evidence" value="ECO:0007669"/>
    <property type="project" value="InterPro"/>
</dbReference>
<dbReference type="GO" id="GO:0006421">
    <property type="term" value="P:asparaginyl-tRNA aminoacylation"/>
    <property type="evidence" value="ECO:0007669"/>
    <property type="project" value="UniProtKB-UniRule"/>
</dbReference>
<dbReference type="CDD" id="cd00776">
    <property type="entry name" value="AsxRS_core"/>
    <property type="match status" value="1"/>
</dbReference>
<dbReference type="CDD" id="cd04318">
    <property type="entry name" value="EcAsnRS_like_N"/>
    <property type="match status" value="1"/>
</dbReference>
<dbReference type="FunFam" id="3.30.930.10:FF:000016">
    <property type="entry name" value="Asparagine--tRNA ligase"/>
    <property type="match status" value="1"/>
</dbReference>
<dbReference type="Gene3D" id="3.30.930.10">
    <property type="entry name" value="Bira Bifunctional Protein, Domain 2"/>
    <property type="match status" value="1"/>
</dbReference>
<dbReference type="Gene3D" id="2.40.50.140">
    <property type="entry name" value="Nucleic acid-binding proteins"/>
    <property type="match status" value="1"/>
</dbReference>
<dbReference type="HAMAP" id="MF_00534">
    <property type="entry name" value="Asn_tRNA_synth"/>
    <property type="match status" value="1"/>
</dbReference>
<dbReference type="InterPro" id="IPR004364">
    <property type="entry name" value="Aa-tRNA-synt_II"/>
</dbReference>
<dbReference type="InterPro" id="IPR006195">
    <property type="entry name" value="aa-tRNA-synth_II"/>
</dbReference>
<dbReference type="InterPro" id="IPR045864">
    <property type="entry name" value="aa-tRNA-synth_II/BPL/LPL"/>
</dbReference>
<dbReference type="InterPro" id="IPR004522">
    <property type="entry name" value="Asn-tRNA-ligase"/>
</dbReference>
<dbReference type="InterPro" id="IPR002312">
    <property type="entry name" value="Asp/Asn-tRNA-synth_IIb"/>
</dbReference>
<dbReference type="InterPro" id="IPR012340">
    <property type="entry name" value="NA-bd_OB-fold"/>
</dbReference>
<dbReference type="InterPro" id="IPR004365">
    <property type="entry name" value="NA-bd_OB_tRNA"/>
</dbReference>
<dbReference type="NCBIfam" id="TIGR00457">
    <property type="entry name" value="asnS"/>
    <property type="match status" value="1"/>
</dbReference>
<dbReference type="NCBIfam" id="NF003037">
    <property type="entry name" value="PRK03932.1"/>
    <property type="match status" value="1"/>
</dbReference>
<dbReference type="PANTHER" id="PTHR22594:SF34">
    <property type="entry name" value="ASPARAGINE--TRNA LIGASE, MITOCHONDRIAL-RELATED"/>
    <property type="match status" value="1"/>
</dbReference>
<dbReference type="PANTHER" id="PTHR22594">
    <property type="entry name" value="ASPARTYL/LYSYL-TRNA SYNTHETASE"/>
    <property type="match status" value="1"/>
</dbReference>
<dbReference type="Pfam" id="PF00152">
    <property type="entry name" value="tRNA-synt_2"/>
    <property type="match status" value="1"/>
</dbReference>
<dbReference type="Pfam" id="PF01336">
    <property type="entry name" value="tRNA_anti-codon"/>
    <property type="match status" value="1"/>
</dbReference>
<dbReference type="PRINTS" id="PR01042">
    <property type="entry name" value="TRNASYNTHASP"/>
</dbReference>
<dbReference type="SUPFAM" id="SSF55681">
    <property type="entry name" value="Class II aaRS and biotin synthetases"/>
    <property type="match status" value="1"/>
</dbReference>
<dbReference type="SUPFAM" id="SSF50249">
    <property type="entry name" value="Nucleic acid-binding proteins"/>
    <property type="match status" value="1"/>
</dbReference>
<dbReference type="PROSITE" id="PS50862">
    <property type="entry name" value="AA_TRNA_LIGASE_II"/>
    <property type="match status" value="1"/>
</dbReference>
<name>SYN_SHEHH</name>
<comment type="catalytic activity">
    <reaction evidence="1">
        <text>tRNA(Asn) + L-asparagine + ATP = L-asparaginyl-tRNA(Asn) + AMP + diphosphate + H(+)</text>
        <dbReference type="Rhea" id="RHEA:11180"/>
        <dbReference type="Rhea" id="RHEA-COMP:9659"/>
        <dbReference type="Rhea" id="RHEA-COMP:9674"/>
        <dbReference type="ChEBI" id="CHEBI:15378"/>
        <dbReference type="ChEBI" id="CHEBI:30616"/>
        <dbReference type="ChEBI" id="CHEBI:33019"/>
        <dbReference type="ChEBI" id="CHEBI:58048"/>
        <dbReference type="ChEBI" id="CHEBI:78442"/>
        <dbReference type="ChEBI" id="CHEBI:78515"/>
        <dbReference type="ChEBI" id="CHEBI:456215"/>
        <dbReference type="EC" id="6.1.1.22"/>
    </reaction>
</comment>
<comment type="subunit">
    <text evidence="1">Homodimer.</text>
</comment>
<comment type="subcellular location">
    <subcellularLocation>
        <location evidence="1">Cytoplasm</location>
    </subcellularLocation>
</comment>
<comment type="similarity">
    <text evidence="1">Belongs to the class-II aminoacyl-tRNA synthetase family.</text>
</comment>
<gene>
    <name evidence="1" type="primary">asnS</name>
    <name type="ordered locus">Shal_2260</name>
</gene>
<accession>B0TUU1</accession>
<feature type="chain" id="PRO_1000081855" description="Asparagine--tRNA ligase">
    <location>
        <begin position="1"/>
        <end position="466"/>
    </location>
</feature>
<organism>
    <name type="scientific">Shewanella halifaxensis (strain HAW-EB4)</name>
    <dbReference type="NCBI Taxonomy" id="458817"/>
    <lineage>
        <taxon>Bacteria</taxon>
        <taxon>Pseudomonadati</taxon>
        <taxon>Pseudomonadota</taxon>
        <taxon>Gammaproteobacteria</taxon>
        <taxon>Alteromonadales</taxon>
        <taxon>Shewanellaceae</taxon>
        <taxon>Shewanella</taxon>
    </lineage>
</organism>
<evidence type="ECO:0000255" key="1">
    <source>
        <dbReference type="HAMAP-Rule" id="MF_00534"/>
    </source>
</evidence>